<keyword id="KW-0963">Cytoplasm</keyword>
<keyword id="KW-0274">FAD</keyword>
<keyword id="KW-0285">Flavoprotein</keyword>
<keyword id="KW-0520">NAD</keyword>
<keyword id="KW-0560">Oxidoreductase</keyword>
<feature type="chain" id="PRO_0000167669" description="Nitric oxide reductase FlRd-NAD(+) reductase">
    <location>
        <begin position="1"/>
        <end position="382"/>
    </location>
</feature>
<protein>
    <recommendedName>
        <fullName evidence="1">Nitric oxide reductase FlRd-NAD(+) reductase</fullName>
        <ecNumber evidence="1">1.18.1.-</ecNumber>
    </recommendedName>
    <alternativeName>
        <fullName evidence="1">Flavorubredoxin reductase</fullName>
        <shortName evidence="1">FlRd-reductase</shortName>
        <shortName evidence="1">FlavoRb reductase</shortName>
    </alternativeName>
</protein>
<proteinExistence type="inferred from homology"/>
<name>NORW_VIBVU</name>
<reference key="1">
    <citation type="submission" date="2002-12" db="EMBL/GenBank/DDBJ databases">
        <title>Complete genome sequence of Vibrio vulnificus CMCP6.</title>
        <authorList>
            <person name="Rhee J.H."/>
            <person name="Kim S.Y."/>
            <person name="Chung S.S."/>
            <person name="Kim J.J."/>
            <person name="Moon Y.H."/>
            <person name="Jeong H."/>
            <person name="Choy H.E."/>
        </authorList>
    </citation>
    <scope>NUCLEOTIDE SEQUENCE [LARGE SCALE GENOMIC DNA]</scope>
    <source>
        <strain>CMCP6</strain>
    </source>
</reference>
<dbReference type="EC" id="1.18.1.-" evidence="1"/>
<dbReference type="EMBL" id="AE016796">
    <property type="protein sequence ID" value="AAO08231.1"/>
    <property type="molecule type" value="Genomic_DNA"/>
</dbReference>
<dbReference type="RefSeq" id="WP_011082227.1">
    <property type="nucleotide sequence ID" value="NC_004460.2"/>
</dbReference>
<dbReference type="SMR" id="Q8D4F7"/>
<dbReference type="KEGG" id="vvu:VV2_1344"/>
<dbReference type="HOGENOM" id="CLU_003291_4_4_6"/>
<dbReference type="UniPathway" id="UPA00638"/>
<dbReference type="Proteomes" id="UP000002275">
    <property type="component" value="Chromosome 2"/>
</dbReference>
<dbReference type="GO" id="GO:0005737">
    <property type="term" value="C:cytoplasm"/>
    <property type="evidence" value="ECO:0007669"/>
    <property type="project" value="UniProtKB-SubCell"/>
</dbReference>
<dbReference type="GO" id="GO:0016731">
    <property type="term" value="F:oxidoreductase activity, acting on iron-sulfur proteins as donors, NAD or NADP as acceptor"/>
    <property type="evidence" value="ECO:0007669"/>
    <property type="project" value="UniProtKB-UniRule"/>
</dbReference>
<dbReference type="Gene3D" id="3.30.390.120">
    <property type="match status" value="1"/>
</dbReference>
<dbReference type="Gene3D" id="3.50.50.60">
    <property type="entry name" value="FAD/NAD(P)-binding domain"/>
    <property type="match status" value="2"/>
</dbReference>
<dbReference type="HAMAP" id="MF_01313">
    <property type="entry name" value="NorW"/>
    <property type="match status" value="1"/>
</dbReference>
<dbReference type="InterPro" id="IPR050260">
    <property type="entry name" value="FAD-bd_OxRdtase"/>
</dbReference>
<dbReference type="InterPro" id="IPR036188">
    <property type="entry name" value="FAD/NAD-bd_sf"/>
</dbReference>
<dbReference type="InterPro" id="IPR023753">
    <property type="entry name" value="FAD/NAD-binding_dom"/>
</dbReference>
<dbReference type="InterPro" id="IPR023961">
    <property type="entry name" value="NO_rdtase_NorW"/>
</dbReference>
<dbReference type="InterPro" id="IPR041364">
    <property type="entry name" value="Rbx-bd"/>
</dbReference>
<dbReference type="NCBIfam" id="NF003437">
    <property type="entry name" value="PRK04965.1"/>
    <property type="match status" value="1"/>
</dbReference>
<dbReference type="PANTHER" id="PTHR43429:SF3">
    <property type="entry name" value="NITRITE REDUCTASE [NAD(P)H]"/>
    <property type="match status" value="1"/>
</dbReference>
<dbReference type="PANTHER" id="PTHR43429">
    <property type="entry name" value="PYRIDINE NUCLEOTIDE-DISULFIDE OXIDOREDUCTASE DOMAIN-CONTAINING"/>
    <property type="match status" value="1"/>
</dbReference>
<dbReference type="Pfam" id="PF07992">
    <property type="entry name" value="Pyr_redox_2"/>
    <property type="match status" value="1"/>
</dbReference>
<dbReference type="Pfam" id="PF18113">
    <property type="entry name" value="Rbx_binding"/>
    <property type="match status" value="1"/>
</dbReference>
<dbReference type="PRINTS" id="PR00368">
    <property type="entry name" value="FADPNR"/>
</dbReference>
<dbReference type="PRINTS" id="PR00411">
    <property type="entry name" value="PNDRDTASEI"/>
</dbReference>
<dbReference type="SUPFAM" id="SSF51905">
    <property type="entry name" value="FAD/NAD(P)-binding domain"/>
    <property type="match status" value="1"/>
</dbReference>
<evidence type="ECO:0000255" key="1">
    <source>
        <dbReference type="HAMAP-Rule" id="MF_01313"/>
    </source>
</evidence>
<sequence length="382" mass="41273">MSDPIIIIGSGFAAYQLVKSVRRLDAHIPIQIFTADDGAEYNKPDLSHVFSKRQTAADLVVKSGEAFAEEYNVQLHAHTQVERVLTQQQQVVANGRCYPYSKLVFATGAQAFVPPMRGDGLAKVMTLNSLQEYQAAEQPLSRAQHVLVIGGGLIGVEIALDLATSGKQVTVVEPNARLLANLLPEFIALPLEQQLMKHGIQLALNSRVESVTEQGQTLAIALHDGREFAVDAVLCAAGLKANTAVAREAGLSVERGICVDHQLNTSDPHIYALGDCAQIEGRMLPYLQPIVLSANVLAKQLVGQEARLTLPPMMVKVKTPSYPIQLAGDFSPESHWQVQLSPEGIVAKAQSPLGDFTGFVVTGEYVTQAFPLLRELSQRANG</sequence>
<accession>Q8D4F7</accession>
<gene>
    <name evidence="1" type="primary">norW</name>
    <name evidence="1" type="synonym">flrR</name>
    <name type="ordered locus">VV2_1344</name>
</gene>
<organism>
    <name type="scientific">Vibrio vulnificus (strain CMCP6)</name>
    <dbReference type="NCBI Taxonomy" id="216895"/>
    <lineage>
        <taxon>Bacteria</taxon>
        <taxon>Pseudomonadati</taxon>
        <taxon>Pseudomonadota</taxon>
        <taxon>Gammaproteobacteria</taxon>
        <taxon>Vibrionales</taxon>
        <taxon>Vibrionaceae</taxon>
        <taxon>Vibrio</taxon>
    </lineage>
</organism>
<comment type="function">
    <text evidence="1">One of at least two accessory proteins for anaerobic nitric oxide (NO) reductase. Reduces the rubredoxin moiety of NO reductase.</text>
</comment>
<comment type="catalytic activity">
    <reaction evidence="1">
        <text>2 reduced [nitric oxide reductase rubredoxin domain] + NAD(+) + H(+) = 2 oxidized [nitric oxide reductase rubredoxin domain] + NADH</text>
        <dbReference type="Rhea" id="RHEA:42960"/>
        <dbReference type="Rhea" id="RHEA-COMP:10304"/>
        <dbReference type="Rhea" id="RHEA-COMP:10305"/>
        <dbReference type="ChEBI" id="CHEBI:15378"/>
        <dbReference type="ChEBI" id="CHEBI:29033"/>
        <dbReference type="ChEBI" id="CHEBI:29034"/>
        <dbReference type="ChEBI" id="CHEBI:57540"/>
        <dbReference type="ChEBI" id="CHEBI:57945"/>
    </reaction>
</comment>
<comment type="cofactor">
    <cofactor evidence="1">
        <name>FAD</name>
        <dbReference type="ChEBI" id="CHEBI:57692"/>
    </cofactor>
</comment>
<comment type="pathway">
    <text evidence="1">Nitrogen metabolism; nitric oxide reduction.</text>
</comment>
<comment type="subcellular location">
    <subcellularLocation>
        <location evidence="1">Cytoplasm</location>
    </subcellularLocation>
</comment>
<comment type="similarity">
    <text evidence="1">Belongs to the FAD-dependent oxidoreductase family.</text>
</comment>